<accession>Q6GEX6</accession>
<comment type="function">
    <text evidence="1">Involved in unsaturated fatty acids biosynthesis. Catalyzes the dehydration of short chain beta-hydroxyacyl-ACPs and long chain saturated and unsaturated beta-hydroxyacyl-ACPs.</text>
</comment>
<comment type="catalytic activity">
    <reaction evidence="1">
        <text>a (3R)-hydroxyacyl-[ACP] = a (2E)-enoyl-[ACP] + H2O</text>
        <dbReference type="Rhea" id="RHEA:13097"/>
        <dbReference type="Rhea" id="RHEA-COMP:9925"/>
        <dbReference type="Rhea" id="RHEA-COMP:9945"/>
        <dbReference type="ChEBI" id="CHEBI:15377"/>
        <dbReference type="ChEBI" id="CHEBI:78784"/>
        <dbReference type="ChEBI" id="CHEBI:78827"/>
        <dbReference type="EC" id="4.2.1.59"/>
    </reaction>
</comment>
<comment type="subcellular location">
    <subcellularLocation>
        <location evidence="1">Cytoplasm</location>
    </subcellularLocation>
</comment>
<comment type="similarity">
    <text evidence="1">Belongs to the thioester dehydratase family. FabZ subfamily.</text>
</comment>
<dbReference type="EC" id="4.2.1.59" evidence="1"/>
<dbReference type="EMBL" id="BX571856">
    <property type="protein sequence ID" value="CAG41168.1"/>
    <property type="molecule type" value="Genomic_DNA"/>
</dbReference>
<dbReference type="RefSeq" id="WP_000447678.1">
    <property type="nucleotide sequence ID" value="NC_002952.2"/>
</dbReference>
<dbReference type="SMR" id="Q6GEX6"/>
<dbReference type="KEGG" id="sar:SAR2187"/>
<dbReference type="HOGENOM" id="CLU_078912_3_0_9"/>
<dbReference type="Proteomes" id="UP000000596">
    <property type="component" value="Chromosome"/>
</dbReference>
<dbReference type="GO" id="GO:0005737">
    <property type="term" value="C:cytoplasm"/>
    <property type="evidence" value="ECO:0007669"/>
    <property type="project" value="UniProtKB-SubCell"/>
</dbReference>
<dbReference type="GO" id="GO:0016020">
    <property type="term" value="C:membrane"/>
    <property type="evidence" value="ECO:0007669"/>
    <property type="project" value="GOC"/>
</dbReference>
<dbReference type="GO" id="GO:0019171">
    <property type="term" value="F:(3R)-hydroxyacyl-[acyl-carrier-protein] dehydratase activity"/>
    <property type="evidence" value="ECO:0007669"/>
    <property type="project" value="UniProtKB-EC"/>
</dbReference>
<dbReference type="GO" id="GO:0006633">
    <property type="term" value="P:fatty acid biosynthetic process"/>
    <property type="evidence" value="ECO:0007669"/>
    <property type="project" value="UniProtKB-UniRule"/>
</dbReference>
<dbReference type="GO" id="GO:0009245">
    <property type="term" value="P:lipid A biosynthetic process"/>
    <property type="evidence" value="ECO:0007669"/>
    <property type="project" value="UniProtKB-UniRule"/>
</dbReference>
<dbReference type="CDD" id="cd01288">
    <property type="entry name" value="FabZ"/>
    <property type="match status" value="1"/>
</dbReference>
<dbReference type="FunFam" id="3.10.129.10:FF:000001">
    <property type="entry name" value="3-hydroxyacyl-[acyl-carrier-protein] dehydratase FabZ"/>
    <property type="match status" value="1"/>
</dbReference>
<dbReference type="Gene3D" id="3.10.129.10">
    <property type="entry name" value="Hotdog Thioesterase"/>
    <property type="match status" value="1"/>
</dbReference>
<dbReference type="HAMAP" id="MF_00406">
    <property type="entry name" value="FabZ"/>
    <property type="match status" value="1"/>
</dbReference>
<dbReference type="InterPro" id="IPR013114">
    <property type="entry name" value="FabA_FabZ"/>
</dbReference>
<dbReference type="InterPro" id="IPR010084">
    <property type="entry name" value="FabZ"/>
</dbReference>
<dbReference type="InterPro" id="IPR029069">
    <property type="entry name" value="HotDog_dom_sf"/>
</dbReference>
<dbReference type="NCBIfam" id="TIGR01750">
    <property type="entry name" value="fabZ"/>
    <property type="match status" value="1"/>
</dbReference>
<dbReference type="NCBIfam" id="NF000582">
    <property type="entry name" value="PRK00006.1"/>
    <property type="match status" value="1"/>
</dbReference>
<dbReference type="PANTHER" id="PTHR30272">
    <property type="entry name" value="3-HYDROXYACYL-[ACYL-CARRIER-PROTEIN] DEHYDRATASE"/>
    <property type="match status" value="1"/>
</dbReference>
<dbReference type="PANTHER" id="PTHR30272:SF1">
    <property type="entry name" value="3-HYDROXYACYL-[ACYL-CARRIER-PROTEIN] DEHYDRATASE"/>
    <property type="match status" value="1"/>
</dbReference>
<dbReference type="Pfam" id="PF07977">
    <property type="entry name" value="FabA"/>
    <property type="match status" value="1"/>
</dbReference>
<dbReference type="SUPFAM" id="SSF54637">
    <property type="entry name" value="Thioesterase/thiol ester dehydrase-isomerase"/>
    <property type="match status" value="1"/>
</dbReference>
<organism>
    <name type="scientific">Staphylococcus aureus (strain MRSA252)</name>
    <dbReference type="NCBI Taxonomy" id="282458"/>
    <lineage>
        <taxon>Bacteria</taxon>
        <taxon>Bacillati</taxon>
        <taxon>Bacillota</taxon>
        <taxon>Bacilli</taxon>
        <taxon>Bacillales</taxon>
        <taxon>Staphylococcaceae</taxon>
        <taxon>Staphylococcus</taxon>
    </lineage>
</organism>
<reference key="1">
    <citation type="journal article" date="2004" name="Proc. Natl. Acad. Sci. U.S.A.">
        <title>Complete genomes of two clinical Staphylococcus aureus strains: evidence for the rapid evolution of virulence and drug resistance.</title>
        <authorList>
            <person name="Holden M.T.G."/>
            <person name="Feil E.J."/>
            <person name="Lindsay J.A."/>
            <person name="Peacock S.J."/>
            <person name="Day N.P.J."/>
            <person name="Enright M.C."/>
            <person name="Foster T.J."/>
            <person name="Moore C.E."/>
            <person name="Hurst L."/>
            <person name="Atkin R."/>
            <person name="Barron A."/>
            <person name="Bason N."/>
            <person name="Bentley S.D."/>
            <person name="Chillingworth C."/>
            <person name="Chillingworth T."/>
            <person name="Churcher C."/>
            <person name="Clark L."/>
            <person name="Corton C."/>
            <person name="Cronin A."/>
            <person name="Doggett J."/>
            <person name="Dowd L."/>
            <person name="Feltwell T."/>
            <person name="Hance Z."/>
            <person name="Harris B."/>
            <person name="Hauser H."/>
            <person name="Holroyd S."/>
            <person name="Jagels K."/>
            <person name="James K.D."/>
            <person name="Lennard N."/>
            <person name="Line A."/>
            <person name="Mayes R."/>
            <person name="Moule S."/>
            <person name="Mungall K."/>
            <person name="Ormond D."/>
            <person name="Quail M.A."/>
            <person name="Rabbinowitsch E."/>
            <person name="Rutherford K.M."/>
            <person name="Sanders M."/>
            <person name="Sharp S."/>
            <person name="Simmonds M."/>
            <person name="Stevens K."/>
            <person name="Whitehead S."/>
            <person name="Barrell B.G."/>
            <person name="Spratt B.G."/>
            <person name="Parkhill J."/>
        </authorList>
    </citation>
    <scope>NUCLEOTIDE SEQUENCE [LARGE SCALE GENOMIC DNA]</scope>
    <source>
        <strain>MRSA252</strain>
    </source>
</reference>
<protein>
    <recommendedName>
        <fullName evidence="1">3-hydroxyacyl-[acyl-carrier-protein] dehydratase FabZ</fullName>
        <ecNumber evidence="1">4.2.1.59</ecNumber>
    </recommendedName>
    <alternativeName>
        <fullName evidence="1">(3R)-hydroxymyristoyl-[acyl-carrier-protein] dehydratase</fullName>
        <shortName evidence="1">(3R)-hydroxymyristoyl-ACP dehydrase</shortName>
    </alternativeName>
    <alternativeName>
        <fullName evidence="1">Beta-hydroxyacyl-ACP dehydratase</fullName>
    </alternativeName>
</protein>
<keyword id="KW-0963">Cytoplasm</keyword>
<keyword id="KW-0441">Lipid A biosynthesis</keyword>
<keyword id="KW-0444">Lipid biosynthesis</keyword>
<keyword id="KW-0443">Lipid metabolism</keyword>
<keyword id="KW-0456">Lyase</keyword>
<gene>
    <name evidence="1" type="primary">fabZ</name>
    <name type="ordered locus">SAR2187</name>
</gene>
<name>FABZ_STAAR</name>
<feature type="chain" id="PRO_0000091733" description="3-hydroxyacyl-[acyl-carrier-protein] dehydratase FabZ">
    <location>
        <begin position="1"/>
        <end position="146"/>
    </location>
</feature>
<feature type="active site" evidence="1">
    <location>
        <position position="51"/>
    </location>
</feature>
<sequence>METIFDYNQIKQIIPHRQPFLLIDKVVEYEEGQRCVAIKQVSGNEPFFQGHFPEYAVMPGVLITEALAQTGAVAILNSEENKGKIALFAGIDKCRFKRQVVPGDTLTLEVEITKIKGPIGKGNAKATVDGQLACSCELTFAIQDVK</sequence>
<proteinExistence type="inferred from homology"/>
<evidence type="ECO:0000255" key="1">
    <source>
        <dbReference type="HAMAP-Rule" id="MF_00406"/>
    </source>
</evidence>